<dbReference type="EC" id="3.4.23.1"/>
<dbReference type="EMBL" id="AB038384">
    <property type="protein sequence ID" value="BAA90871.1"/>
    <property type="molecule type" value="mRNA"/>
</dbReference>
<dbReference type="PIR" id="JC7245">
    <property type="entry name" value="JC7245"/>
</dbReference>
<dbReference type="RefSeq" id="NP_001254696.1">
    <property type="nucleotide sequence ID" value="NM_001267767.1"/>
</dbReference>
<dbReference type="SMR" id="Q9N2D4"/>
<dbReference type="FunCoup" id="Q9N2D4">
    <property type="interactions" value="89"/>
</dbReference>
<dbReference type="STRING" id="9483.ENSCJAP00000036045"/>
<dbReference type="MEROPS" id="A01.001"/>
<dbReference type="Ensembl" id="ENSCJAT00000038063.5">
    <property type="protein sequence ID" value="ENSCJAP00000036045.3"/>
    <property type="gene ID" value="ENSCJAG00000019394.5"/>
</dbReference>
<dbReference type="GeneID" id="100385980"/>
<dbReference type="KEGG" id="cjc:100385980"/>
<dbReference type="CTD" id="403711"/>
<dbReference type="eggNOG" id="KOG1339">
    <property type="taxonomic scope" value="Eukaryota"/>
</dbReference>
<dbReference type="GeneTree" id="ENSGT00940000155036"/>
<dbReference type="InParanoid" id="Q9N2D4"/>
<dbReference type="OMA" id="MGFWTID"/>
<dbReference type="OrthoDB" id="10045365at2759"/>
<dbReference type="Proteomes" id="UP000008225">
    <property type="component" value="Chromosome 11"/>
</dbReference>
<dbReference type="Bgee" id="ENSCJAG00000019394">
    <property type="expression patterns" value="Expressed in testis and 1 other cell type or tissue"/>
</dbReference>
<dbReference type="GO" id="GO:0070062">
    <property type="term" value="C:extracellular exosome"/>
    <property type="evidence" value="ECO:0007669"/>
    <property type="project" value="TreeGrafter"/>
</dbReference>
<dbReference type="GO" id="GO:0004190">
    <property type="term" value="F:aspartic-type endopeptidase activity"/>
    <property type="evidence" value="ECO:0007669"/>
    <property type="project" value="UniProtKB-KW"/>
</dbReference>
<dbReference type="GO" id="GO:0007586">
    <property type="term" value="P:digestion"/>
    <property type="evidence" value="ECO:0007669"/>
    <property type="project" value="UniProtKB-KW"/>
</dbReference>
<dbReference type="GO" id="GO:0006508">
    <property type="term" value="P:proteolysis"/>
    <property type="evidence" value="ECO:0007669"/>
    <property type="project" value="UniProtKB-KW"/>
</dbReference>
<dbReference type="CDD" id="cd05478">
    <property type="entry name" value="pepsin_A"/>
    <property type="match status" value="1"/>
</dbReference>
<dbReference type="FunFam" id="2.40.70.10:FF:000006">
    <property type="entry name" value="Cathepsin E"/>
    <property type="match status" value="1"/>
</dbReference>
<dbReference type="FunFam" id="2.40.70.10:FF:000004">
    <property type="entry name" value="Pepsin A"/>
    <property type="match status" value="1"/>
</dbReference>
<dbReference type="Gene3D" id="6.10.140.60">
    <property type="match status" value="1"/>
</dbReference>
<dbReference type="Gene3D" id="2.40.70.10">
    <property type="entry name" value="Acid Proteases"/>
    <property type="match status" value="2"/>
</dbReference>
<dbReference type="InterPro" id="IPR001461">
    <property type="entry name" value="Aspartic_peptidase_A1"/>
</dbReference>
<dbReference type="InterPro" id="IPR001969">
    <property type="entry name" value="Aspartic_peptidase_AS"/>
</dbReference>
<dbReference type="InterPro" id="IPR012848">
    <property type="entry name" value="Aspartic_peptidase_N"/>
</dbReference>
<dbReference type="InterPro" id="IPR034162">
    <property type="entry name" value="Pepsin_A"/>
</dbReference>
<dbReference type="InterPro" id="IPR033121">
    <property type="entry name" value="PEPTIDASE_A1"/>
</dbReference>
<dbReference type="InterPro" id="IPR021109">
    <property type="entry name" value="Peptidase_aspartic_dom_sf"/>
</dbReference>
<dbReference type="PANTHER" id="PTHR47966">
    <property type="entry name" value="BETA-SITE APP-CLEAVING ENZYME, ISOFORM A-RELATED"/>
    <property type="match status" value="1"/>
</dbReference>
<dbReference type="PANTHER" id="PTHR47966:SF22">
    <property type="entry name" value="PEPSIN A-3-RELATED"/>
    <property type="match status" value="1"/>
</dbReference>
<dbReference type="Pfam" id="PF07966">
    <property type="entry name" value="A1_Propeptide"/>
    <property type="match status" value="1"/>
</dbReference>
<dbReference type="Pfam" id="PF00026">
    <property type="entry name" value="Asp"/>
    <property type="match status" value="1"/>
</dbReference>
<dbReference type="PRINTS" id="PR00792">
    <property type="entry name" value="PEPSIN"/>
</dbReference>
<dbReference type="SUPFAM" id="SSF50630">
    <property type="entry name" value="Acid proteases"/>
    <property type="match status" value="1"/>
</dbReference>
<dbReference type="PROSITE" id="PS00141">
    <property type="entry name" value="ASP_PROTEASE"/>
    <property type="match status" value="2"/>
</dbReference>
<dbReference type="PROSITE" id="PS51767">
    <property type="entry name" value="PEPTIDASE_A1"/>
    <property type="match status" value="1"/>
</dbReference>
<reference key="1">
    <citation type="journal article" date="2000" name="J. Biochem.">
        <title>New World monkey pepsinogens A and C, and prochymosins. Purification, characterization of enzymatic properties, cDNA cloning, and molecular evolution.</title>
        <authorList>
            <person name="Kageyama T."/>
        </authorList>
    </citation>
    <scope>NUCLEOTIDE SEQUENCE [MRNA]</scope>
    <scope>PROTEIN SEQUENCE OF 16-25</scope>
    <scope>FUNCTION</scope>
    <scope>ACTIVITY REGULATION</scope>
    <source>
        <tissue>Gastric mucosa</tissue>
    </source>
</reference>
<feature type="signal peptide" evidence="5">
    <location>
        <begin position="1"/>
        <end position="15"/>
    </location>
</feature>
<feature type="propeptide" id="PRO_0000026009" description="Activation peptide" evidence="1">
    <location>
        <begin position="16"/>
        <end position="61"/>
    </location>
</feature>
<feature type="chain" id="PRO_0000026010" description="Pepsin A">
    <location>
        <begin position="62"/>
        <end position="387"/>
    </location>
</feature>
<feature type="domain" description="Peptidase A1" evidence="3">
    <location>
        <begin position="75"/>
        <end position="384"/>
    </location>
</feature>
<feature type="active site" evidence="4">
    <location>
        <position position="93"/>
    </location>
</feature>
<feature type="active site" evidence="4">
    <location>
        <position position="276"/>
    </location>
</feature>
<feature type="modified residue" description="Phosphoserine" evidence="2">
    <location>
        <position position="129"/>
    </location>
</feature>
<feature type="disulfide bond" evidence="1">
    <location>
        <begin position="106"/>
        <end position="111"/>
    </location>
</feature>
<feature type="disulfide bond" evidence="1">
    <location>
        <begin position="267"/>
        <end position="271"/>
    </location>
</feature>
<feature type="disulfide bond" evidence="1">
    <location>
        <begin position="310"/>
        <end position="343"/>
    </location>
</feature>
<organism>
    <name type="scientific">Callithrix jacchus</name>
    <name type="common">White-tufted-ear marmoset</name>
    <dbReference type="NCBI Taxonomy" id="9483"/>
    <lineage>
        <taxon>Eukaryota</taxon>
        <taxon>Metazoa</taxon>
        <taxon>Chordata</taxon>
        <taxon>Craniata</taxon>
        <taxon>Vertebrata</taxon>
        <taxon>Euteleostomi</taxon>
        <taxon>Mammalia</taxon>
        <taxon>Eutheria</taxon>
        <taxon>Euarchontoglires</taxon>
        <taxon>Primates</taxon>
        <taxon>Haplorrhini</taxon>
        <taxon>Platyrrhini</taxon>
        <taxon>Cebidae</taxon>
        <taxon>Callitrichinae</taxon>
        <taxon>Callithrix</taxon>
        <taxon>Callithrix</taxon>
    </lineage>
</organism>
<protein>
    <recommendedName>
        <fullName>Pepsin A</fullName>
        <ecNumber>3.4.23.1</ecNumber>
    </recommendedName>
</protein>
<sequence length="387" mass="41564">MKWLLLLSLVALSECLYKVSLIKKKSLRKNLIEHGLLKDFLKNNTLDPASKYFPQGEAATMIANQPLVNYLDMEYFGTIGIGTPAQEFTVIFDTGSSNLWVPSIYCSSPACTNHNRFNPQESSTYQATSQTLSIAYGTGSMTGILGYDTVQVGGIADTNQIFGLSETEPGSFLYYSPFDGILGLAYPSISSSGATPVFDNIWNQDLVSQDLFSVYLSSNDQSGSVVMFGGIDSSYYTGSLNWVPVSAEGYWQITVDSITMNGEAIACAEGCQAIVDTGTSLLSGPTSPIANIQSYIGASENSNGEMVVSCSAISSLPDIVFTINGIQYPVPASAYILQDEGGCTSGFQGMNIPTAYGELWILGDVFIRQYFAVFDRANNQVGLAPVA</sequence>
<evidence type="ECO:0000250" key="1"/>
<evidence type="ECO:0000250" key="2">
    <source>
        <dbReference type="UniProtKB" id="P03954"/>
    </source>
</evidence>
<evidence type="ECO:0000255" key="3">
    <source>
        <dbReference type="PROSITE-ProRule" id="PRU01103"/>
    </source>
</evidence>
<evidence type="ECO:0000255" key="4">
    <source>
        <dbReference type="PROSITE-ProRule" id="PRU10094"/>
    </source>
</evidence>
<evidence type="ECO:0000269" key="5">
    <source>
    </source>
</evidence>
<evidence type="ECO:0000305" key="6"/>
<comment type="function">
    <text evidence="5">Shows particularly broad specificity; although bonds involving phenylalanine and leucine are preferred, many others are also cleaved to some extent.</text>
</comment>
<comment type="catalytic activity">
    <reaction evidence="4">
        <text>Preferential cleavage: hydrophobic, preferably aromatic, residues in P1 and P1' positions. Cleaves 1-Phe-|-Val-2, 4-Gln-|-His-5, 13-Glu-|-Ala-14, 14-Ala-|-Leu-15, 15-Leu-|-Tyr-16, 16-Tyr-|-Leu-17, 23-Gly-|-Phe-24, 24-Phe-|-Phe-25 and 25-Phe-|-Tyr-26 bonds in the B chain of insulin.</text>
        <dbReference type="EC" id="3.4.23.1"/>
    </reaction>
</comment>
<comment type="activity regulation">
    <text evidence="5">Inhibited by pepstatin.</text>
</comment>
<comment type="biophysicochemical properties">
    <phDependence>
        <text>Optimum pH is about 2.</text>
    </phDependence>
</comment>
<comment type="subcellular location">
    <subcellularLocation>
        <location>Secreted</location>
    </subcellularLocation>
</comment>
<comment type="similarity">
    <text evidence="6">Belongs to the peptidase A1 family.</text>
</comment>
<accession>Q9N2D4</accession>
<proteinExistence type="evidence at protein level"/>
<keyword id="KW-0064">Aspartyl protease</keyword>
<keyword id="KW-0222">Digestion</keyword>
<keyword id="KW-0903">Direct protein sequencing</keyword>
<keyword id="KW-1015">Disulfide bond</keyword>
<keyword id="KW-0378">Hydrolase</keyword>
<keyword id="KW-0597">Phosphoprotein</keyword>
<keyword id="KW-0645">Protease</keyword>
<keyword id="KW-1185">Reference proteome</keyword>
<keyword id="KW-0964">Secreted</keyword>
<keyword id="KW-0732">Signal</keyword>
<keyword id="KW-0865">Zymogen</keyword>
<gene>
    <name type="primary">PGA</name>
</gene>
<name>PEPA_CALJA</name>